<accession>Q889V5</accession>
<gene>
    <name evidence="1" type="primary">rplR</name>
    <name type="ordered locus">PSPTO_0642</name>
</gene>
<sequence>MTVKKVTRLRRARKARLKMHELEVVRLCVHRSSQHIYAQVISADGSKVLASASTLDKELRDGATGNIDAATKVGKLVAERAKAAGVSQVAFDRSGFKYHGRVKALADAAREGGLEF</sequence>
<protein>
    <recommendedName>
        <fullName evidence="1">Large ribosomal subunit protein uL18</fullName>
    </recommendedName>
    <alternativeName>
        <fullName evidence="2">50S ribosomal protein L18</fullName>
    </alternativeName>
</protein>
<comment type="function">
    <text evidence="1">This is one of the proteins that bind and probably mediate the attachment of the 5S RNA into the large ribosomal subunit, where it forms part of the central protuberance.</text>
</comment>
<comment type="subunit">
    <text evidence="1">Part of the 50S ribosomal subunit; part of the 5S rRNA/L5/L18/L25 subcomplex. Contacts the 5S and 23S rRNAs.</text>
</comment>
<comment type="similarity">
    <text evidence="1">Belongs to the universal ribosomal protein uL18 family.</text>
</comment>
<evidence type="ECO:0000255" key="1">
    <source>
        <dbReference type="HAMAP-Rule" id="MF_01337"/>
    </source>
</evidence>
<evidence type="ECO:0000305" key="2"/>
<feature type="chain" id="PRO_0000131324" description="Large ribosomal subunit protein uL18">
    <location>
        <begin position="1"/>
        <end position="116"/>
    </location>
</feature>
<name>RL18_PSESM</name>
<keyword id="KW-1185">Reference proteome</keyword>
<keyword id="KW-0687">Ribonucleoprotein</keyword>
<keyword id="KW-0689">Ribosomal protein</keyword>
<keyword id="KW-0694">RNA-binding</keyword>
<keyword id="KW-0699">rRNA-binding</keyword>
<dbReference type="EMBL" id="AE016853">
    <property type="protein sequence ID" value="AAO54184.1"/>
    <property type="molecule type" value="Genomic_DNA"/>
</dbReference>
<dbReference type="RefSeq" id="NP_790489.1">
    <property type="nucleotide sequence ID" value="NC_004578.1"/>
</dbReference>
<dbReference type="RefSeq" id="WP_002555473.1">
    <property type="nucleotide sequence ID" value="NC_004578.1"/>
</dbReference>
<dbReference type="SMR" id="Q889V5"/>
<dbReference type="STRING" id="223283.PSPTO_0642"/>
<dbReference type="GeneID" id="96221014"/>
<dbReference type="KEGG" id="pst:PSPTO_0642"/>
<dbReference type="PATRIC" id="fig|223283.9.peg.648"/>
<dbReference type="eggNOG" id="COG0256">
    <property type="taxonomic scope" value="Bacteria"/>
</dbReference>
<dbReference type="HOGENOM" id="CLU_098841_0_1_6"/>
<dbReference type="OrthoDB" id="9810939at2"/>
<dbReference type="PhylomeDB" id="Q889V5"/>
<dbReference type="Proteomes" id="UP000002515">
    <property type="component" value="Chromosome"/>
</dbReference>
<dbReference type="GO" id="GO:0022625">
    <property type="term" value="C:cytosolic large ribosomal subunit"/>
    <property type="evidence" value="ECO:0007669"/>
    <property type="project" value="TreeGrafter"/>
</dbReference>
<dbReference type="GO" id="GO:0008097">
    <property type="term" value="F:5S rRNA binding"/>
    <property type="evidence" value="ECO:0007669"/>
    <property type="project" value="TreeGrafter"/>
</dbReference>
<dbReference type="GO" id="GO:0003735">
    <property type="term" value="F:structural constituent of ribosome"/>
    <property type="evidence" value="ECO:0007669"/>
    <property type="project" value="InterPro"/>
</dbReference>
<dbReference type="GO" id="GO:0006412">
    <property type="term" value="P:translation"/>
    <property type="evidence" value="ECO:0007669"/>
    <property type="project" value="UniProtKB-UniRule"/>
</dbReference>
<dbReference type="CDD" id="cd00432">
    <property type="entry name" value="Ribosomal_L18_L5e"/>
    <property type="match status" value="1"/>
</dbReference>
<dbReference type="FunFam" id="3.30.420.100:FF:000001">
    <property type="entry name" value="50S ribosomal protein L18"/>
    <property type="match status" value="1"/>
</dbReference>
<dbReference type="Gene3D" id="3.30.420.100">
    <property type="match status" value="1"/>
</dbReference>
<dbReference type="HAMAP" id="MF_01337_B">
    <property type="entry name" value="Ribosomal_uL18_B"/>
    <property type="match status" value="1"/>
</dbReference>
<dbReference type="InterPro" id="IPR004389">
    <property type="entry name" value="Ribosomal_uL18_bac-type"/>
</dbReference>
<dbReference type="InterPro" id="IPR005484">
    <property type="entry name" value="Ribosomal_uL18_bac/euk"/>
</dbReference>
<dbReference type="NCBIfam" id="TIGR00060">
    <property type="entry name" value="L18_bact"/>
    <property type="match status" value="1"/>
</dbReference>
<dbReference type="PANTHER" id="PTHR12899">
    <property type="entry name" value="39S RIBOSOMAL PROTEIN L18, MITOCHONDRIAL"/>
    <property type="match status" value="1"/>
</dbReference>
<dbReference type="PANTHER" id="PTHR12899:SF3">
    <property type="entry name" value="LARGE RIBOSOMAL SUBUNIT PROTEIN UL18M"/>
    <property type="match status" value="1"/>
</dbReference>
<dbReference type="Pfam" id="PF00861">
    <property type="entry name" value="Ribosomal_L18p"/>
    <property type="match status" value="1"/>
</dbReference>
<dbReference type="SUPFAM" id="SSF53137">
    <property type="entry name" value="Translational machinery components"/>
    <property type="match status" value="1"/>
</dbReference>
<reference key="1">
    <citation type="journal article" date="2003" name="Proc. Natl. Acad. Sci. U.S.A.">
        <title>The complete genome sequence of the Arabidopsis and tomato pathogen Pseudomonas syringae pv. tomato DC3000.</title>
        <authorList>
            <person name="Buell C.R."/>
            <person name="Joardar V."/>
            <person name="Lindeberg M."/>
            <person name="Selengut J."/>
            <person name="Paulsen I.T."/>
            <person name="Gwinn M.L."/>
            <person name="Dodson R.J."/>
            <person name="DeBoy R.T."/>
            <person name="Durkin A.S."/>
            <person name="Kolonay J.F."/>
            <person name="Madupu R."/>
            <person name="Daugherty S.C."/>
            <person name="Brinkac L.M."/>
            <person name="Beanan M.J."/>
            <person name="Haft D.H."/>
            <person name="Nelson W.C."/>
            <person name="Davidsen T.M."/>
            <person name="Zafar N."/>
            <person name="Zhou L."/>
            <person name="Liu J."/>
            <person name="Yuan Q."/>
            <person name="Khouri H.M."/>
            <person name="Fedorova N.B."/>
            <person name="Tran B."/>
            <person name="Russell D."/>
            <person name="Berry K.J."/>
            <person name="Utterback T.R."/>
            <person name="Van Aken S.E."/>
            <person name="Feldblyum T.V."/>
            <person name="D'Ascenzo M."/>
            <person name="Deng W.-L."/>
            <person name="Ramos A.R."/>
            <person name="Alfano J.R."/>
            <person name="Cartinhour S."/>
            <person name="Chatterjee A.K."/>
            <person name="Delaney T.P."/>
            <person name="Lazarowitz S.G."/>
            <person name="Martin G.B."/>
            <person name="Schneider D.J."/>
            <person name="Tang X."/>
            <person name="Bender C.L."/>
            <person name="White O."/>
            <person name="Fraser C.M."/>
            <person name="Collmer A."/>
        </authorList>
    </citation>
    <scope>NUCLEOTIDE SEQUENCE [LARGE SCALE GENOMIC DNA]</scope>
    <source>
        <strain>ATCC BAA-871 / DC3000</strain>
    </source>
</reference>
<organism>
    <name type="scientific">Pseudomonas syringae pv. tomato (strain ATCC BAA-871 / DC3000)</name>
    <dbReference type="NCBI Taxonomy" id="223283"/>
    <lineage>
        <taxon>Bacteria</taxon>
        <taxon>Pseudomonadati</taxon>
        <taxon>Pseudomonadota</taxon>
        <taxon>Gammaproteobacteria</taxon>
        <taxon>Pseudomonadales</taxon>
        <taxon>Pseudomonadaceae</taxon>
        <taxon>Pseudomonas</taxon>
    </lineage>
</organism>
<proteinExistence type="inferred from homology"/>